<evidence type="ECO:0000250" key="1">
    <source>
        <dbReference type="UniProtKB" id="Q5NUF3"/>
    </source>
</evidence>
<evidence type="ECO:0000255" key="2">
    <source>
        <dbReference type="HAMAP-Rule" id="MF_01958"/>
    </source>
</evidence>
<reference key="1">
    <citation type="journal article" date="2008" name="J. Bacteriol.">
        <title>The complete genome sequence of Escherichia coli DH10B: insights into the biology of a laboratory workhorse.</title>
        <authorList>
            <person name="Durfee T."/>
            <person name="Nelson R."/>
            <person name="Baldwin S."/>
            <person name="Plunkett G. III"/>
            <person name="Burland V."/>
            <person name="Mau B."/>
            <person name="Petrosino J.F."/>
            <person name="Qin X."/>
            <person name="Muzny D.M."/>
            <person name="Ayele M."/>
            <person name="Gibbs R.A."/>
            <person name="Csorgo B."/>
            <person name="Posfai G."/>
            <person name="Weinstock G.M."/>
            <person name="Blattner F.R."/>
        </authorList>
    </citation>
    <scope>NUCLEOTIDE SEQUENCE [LARGE SCALE GENOMIC DNA]</scope>
    <source>
        <strain>K12 / DH10B</strain>
    </source>
</reference>
<feature type="chain" id="PRO_1000188982" description="Acetyl esterase">
    <location>
        <begin position="1"/>
        <end position="319"/>
    </location>
</feature>
<feature type="short sequence motif" description="Involved in the stabilization of the negatively charged intermediate by the formation of the oxyanion hole" evidence="1">
    <location>
        <begin position="91"/>
        <end position="93"/>
    </location>
</feature>
<feature type="active site" evidence="2">
    <location>
        <position position="165"/>
    </location>
</feature>
<feature type="active site" evidence="2">
    <location>
        <position position="262"/>
    </location>
</feature>
<feature type="active site" evidence="2">
    <location>
        <position position="292"/>
    </location>
</feature>
<protein>
    <recommendedName>
        <fullName evidence="2">Acetyl esterase</fullName>
        <ecNumber evidence="2">3.1.1.-</ecNumber>
    </recommendedName>
</protein>
<gene>
    <name evidence="2" type="primary">aes</name>
    <name type="ordered locus">ECDH10B_0432</name>
</gene>
<proteinExistence type="inferred from homology"/>
<sequence length="319" mass="36034">MKPENKLPVLDLISAEMKTVVNTLQPDLPPWPATGTIAEQRQYYTLERRFWNAGAPEMATRAYMVPTKYGQVETRLFCPQPDSPATLFYLHGGGFILGNLDTHDRIMRLLASYSQCTVIGIDYTLSPEARFPQAIEEIVAACCYFHQQAEDYQINMSRIGFAGDSAGAMLALASALWLRDKQIDCGKVAGVLLWYGLYGLRDSVTRRLLGGVWDGLTQQDLQMYEEAYLSNDADRESPYYCLFNNDLTREVPPCFIAGAEFDPLLDDSRLLYQTLAAHQQPCEFKLYPGTLHAFLHYSRMMKTADEALRDGAQFFTAQL</sequence>
<name>AES_ECODH</name>
<organism>
    <name type="scientific">Escherichia coli (strain K12 / DH10B)</name>
    <dbReference type="NCBI Taxonomy" id="316385"/>
    <lineage>
        <taxon>Bacteria</taxon>
        <taxon>Pseudomonadati</taxon>
        <taxon>Pseudomonadota</taxon>
        <taxon>Gammaproteobacteria</taxon>
        <taxon>Enterobacterales</taxon>
        <taxon>Enterobacteriaceae</taxon>
        <taxon>Escherichia</taxon>
    </lineage>
</organism>
<keyword id="KW-0963">Cytoplasm</keyword>
<keyword id="KW-0378">Hydrolase</keyword>
<keyword id="KW-0719">Serine esterase</keyword>
<dbReference type="EC" id="3.1.1.-" evidence="2"/>
<dbReference type="EMBL" id="CP000948">
    <property type="protein sequence ID" value="ACB01603.1"/>
    <property type="molecule type" value="Genomic_DNA"/>
</dbReference>
<dbReference type="RefSeq" id="WP_000801813.1">
    <property type="nucleotide sequence ID" value="NC_010473.1"/>
</dbReference>
<dbReference type="SMR" id="B1XFR3"/>
<dbReference type="ESTHER" id="ecoli-Aes">
    <property type="family name" value="Acetyl_esterase"/>
</dbReference>
<dbReference type="MEROPS" id="S09.A47"/>
<dbReference type="KEGG" id="ecd:ECDH10B_0432"/>
<dbReference type="HOGENOM" id="CLU_012494_6_4_6"/>
<dbReference type="GO" id="GO:0005737">
    <property type="term" value="C:cytoplasm"/>
    <property type="evidence" value="ECO:0007669"/>
    <property type="project" value="UniProtKB-SubCell"/>
</dbReference>
<dbReference type="GO" id="GO:0052689">
    <property type="term" value="F:carboxylic ester hydrolase activity"/>
    <property type="evidence" value="ECO:0007669"/>
    <property type="project" value="UniProtKB-UniRule"/>
</dbReference>
<dbReference type="FunFam" id="3.40.50.1820:FF:000035">
    <property type="entry name" value="Acetyl esterase"/>
    <property type="match status" value="1"/>
</dbReference>
<dbReference type="Gene3D" id="3.40.50.1820">
    <property type="entry name" value="alpha/beta hydrolase"/>
    <property type="match status" value="1"/>
</dbReference>
<dbReference type="HAMAP" id="MF_01958">
    <property type="entry name" value="Acetyl_esterase"/>
    <property type="match status" value="1"/>
</dbReference>
<dbReference type="InterPro" id="IPR013094">
    <property type="entry name" value="AB_hydrolase_3"/>
</dbReference>
<dbReference type="InterPro" id="IPR029058">
    <property type="entry name" value="AB_hydrolase_fold"/>
</dbReference>
<dbReference type="InterPro" id="IPR023508">
    <property type="entry name" value="Acetyl_esterase"/>
</dbReference>
<dbReference type="InterPro" id="IPR050300">
    <property type="entry name" value="GDXG_lipolytic_enzyme"/>
</dbReference>
<dbReference type="InterPro" id="IPR002168">
    <property type="entry name" value="Lipase_GDXG_HIS_AS"/>
</dbReference>
<dbReference type="InterPro" id="IPR033140">
    <property type="entry name" value="Lipase_GDXG_put_SER_AS"/>
</dbReference>
<dbReference type="NCBIfam" id="NF007547">
    <property type="entry name" value="PRK10162.1"/>
    <property type="match status" value="1"/>
</dbReference>
<dbReference type="PANTHER" id="PTHR48081">
    <property type="entry name" value="AB HYDROLASE SUPERFAMILY PROTEIN C4A8.06C"/>
    <property type="match status" value="1"/>
</dbReference>
<dbReference type="PANTHER" id="PTHR48081:SF8">
    <property type="entry name" value="ALPHA_BETA HYDROLASE FOLD-3 DOMAIN-CONTAINING PROTEIN-RELATED"/>
    <property type="match status" value="1"/>
</dbReference>
<dbReference type="Pfam" id="PF07859">
    <property type="entry name" value="Abhydrolase_3"/>
    <property type="match status" value="1"/>
</dbReference>
<dbReference type="SUPFAM" id="SSF53474">
    <property type="entry name" value="alpha/beta-Hydrolases"/>
    <property type="match status" value="1"/>
</dbReference>
<dbReference type="PROSITE" id="PS01173">
    <property type="entry name" value="LIPASE_GDXG_HIS"/>
    <property type="match status" value="1"/>
</dbReference>
<dbReference type="PROSITE" id="PS01174">
    <property type="entry name" value="LIPASE_GDXG_SER"/>
    <property type="match status" value="1"/>
</dbReference>
<accession>B1XFR3</accession>
<comment type="function">
    <text evidence="2">Displays esterase activity towards short chain fatty esters (acyl chain length of up to 8 carbons). Able to hydrolyze triacetylglycerol (triacetin) and tributyrylglycerol (tributyrin), but not trioleylglycerol (triolein) or cholesterol oleate. Negatively regulates MalT activity by antagonizing maltotriose binding. Inhibits MelA galactosidase activity.</text>
</comment>
<comment type="subunit">
    <text evidence="2">Homodimer. Interacts with MalT and MelA.</text>
</comment>
<comment type="subcellular location">
    <subcellularLocation>
        <location evidence="2">Cytoplasm</location>
    </subcellularLocation>
</comment>
<comment type="similarity">
    <text evidence="2">Belongs to the 'GDXG' lipolytic enzyme family.</text>
</comment>